<reference key="1">
    <citation type="submission" date="2006-12" db="EMBL/GenBank/DDBJ databases">
        <title>Complete sequence of Shewanella amazonensis SB2B.</title>
        <authorList>
            <consortium name="US DOE Joint Genome Institute"/>
            <person name="Copeland A."/>
            <person name="Lucas S."/>
            <person name="Lapidus A."/>
            <person name="Barry K."/>
            <person name="Detter J.C."/>
            <person name="Glavina del Rio T."/>
            <person name="Hammon N."/>
            <person name="Israni S."/>
            <person name="Dalin E."/>
            <person name="Tice H."/>
            <person name="Pitluck S."/>
            <person name="Munk A.C."/>
            <person name="Brettin T."/>
            <person name="Bruce D."/>
            <person name="Han C."/>
            <person name="Tapia R."/>
            <person name="Gilna P."/>
            <person name="Schmutz J."/>
            <person name="Larimer F."/>
            <person name="Land M."/>
            <person name="Hauser L."/>
            <person name="Kyrpides N."/>
            <person name="Mikhailova N."/>
            <person name="Fredrickson J."/>
            <person name="Richardson P."/>
        </authorList>
    </citation>
    <scope>NUCLEOTIDE SEQUENCE [LARGE SCALE GENOMIC DNA]</scope>
    <source>
        <strain>ATCC BAA-1098 / SB2B</strain>
    </source>
</reference>
<feature type="chain" id="PRO_0000293160" description="D-erythrose-4-phosphate dehydrogenase">
    <location>
        <begin position="1"/>
        <end position="338"/>
    </location>
</feature>
<feature type="active site" description="Nucleophile" evidence="1">
    <location>
        <position position="154"/>
    </location>
</feature>
<feature type="binding site" evidence="1">
    <location>
        <begin position="11"/>
        <end position="12"/>
    </location>
    <ligand>
        <name>NAD(+)</name>
        <dbReference type="ChEBI" id="CHEBI:57540"/>
    </ligand>
</feature>
<feature type="binding site" evidence="1">
    <location>
        <begin position="153"/>
        <end position="155"/>
    </location>
    <ligand>
        <name>substrate</name>
    </ligand>
</feature>
<feature type="binding site" evidence="1">
    <location>
        <position position="199"/>
    </location>
    <ligand>
        <name>substrate</name>
    </ligand>
</feature>
<feature type="binding site" evidence="1">
    <location>
        <begin position="212"/>
        <end position="213"/>
    </location>
    <ligand>
        <name>substrate</name>
    </ligand>
</feature>
<feature type="binding site" evidence="1">
    <location>
        <position position="235"/>
    </location>
    <ligand>
        <name>substrate</name>
    </ligand>
</feature>
<feature type="binding site" evidence="1">
    <location>
        <position position="317"/>
    </location>
    <ligand>
        <name>NAD(+)</name>
        <dbReference type="ChEBI" id="CHEBI:57540"/>
    </ligand>
</feature>
<feature type="site" description="Activates thiol group during catalysis" evidence="1">
    <location>
        <position position="181"/>
    </location>
</feature>
<name>E4PD_SHEAM</name>
<comment type="function">
    <text evidence="1">Catalyzes the NAD-dependent conversion of D-erythrose 4-phosphate to 4-phosphoerythronate.</text>
</comment>
<comment type="catalytic activity">
    <reaction evidence="1">
        <text>D-erythrose 4-phosphate + NAD(+) + H2O = 4-phospho-D-erythronate + NADH + 2 H(+)</text>
        <dbReference type="Rhea" id="RHEA:12056"/>
        <dbReference type="ChEBI" id="CHEBI:15377"/>
        <dbReference type="ChEBI" id="CHEBI:15378"/>
        <dbReference type="ChEBI" id="CHEBI:16897"/>
        <dbReference type="ChEBI" id="CHEBI:57540"/>
        <dbReference type="ChEBI" id="CHEBI:57945"/>
        <dbReference type="ChEBI" id="CHEBI:58766"/>
        <dbReference type="EC" id="1.2.1.72"/>
    </reaction>
</comment>
<comment type="pathway">
    <text evidence="1">Cofactor biosynthesis; pyridoxine 5'-phosphate biosynthesis; pyridoxine 5'-phosphate from D-erythrose 4-phosphate: step 1/5.</text>
</comment>
<comment type="subunit">
    <text evidence="1">Homotetramer.</text>
</comment>
<comment type="subcellular location">
    <subcellularLocation>
        <location evidence="1">Cytoplasm</location>
    </subcellularLocation>
</comment>
<comment type="similarity">
    <text evidence="1">Belongs to the glyceraldehyde-3-phosphate dehydrogenase family. Epd subfamily.</text>
</comment>
<keyword id="KW-0963">Cytoplasm</keyword>
<keyword id="KW-0520">NAD</keyword>
<keyword id="KW-0560">Oxidoreductase</keyword>
<keyword id="KW-0664">Pyridoxine biosynthesis</keyword>
<keyword id="KW-1185">Reference proteome</keyword>
<proteinExistence type="inferred from homology"/>
<accession>A1S9A4</accession>
<evidence type="ECO:0000255" key="1">
    <source>
        <dbReference type="HAMAP-Rule" id="MF_01640"/>
    </source>
</evidence>
<gene>
    <name evidence="1" type="primary">epd</name>
    <name type="ordered locus">Sama_2758</name>
</gene>
<dbReference type="EC" id="1.2.1.72" evidence="1"/>
<dbReference type="EMBL" id="CP000507">
    <property type="protein sequence ID" value="ABM00961.1"/>
    <property type="molecule type" value="Genomic_DNA"/>
</dbReference>
<dbReference type="RefSeq" id="WP_011760866.1">
    <property type="nucleotide sequence ID" value="NC_008700.1"/>
</dbReference>
<dbReference type="SMR" id="A1S9A4"/>
<dbReference type="STRING" id="326297.Sama_2758"/>
<dbReference type="KEGG" id="saz:Sama_2758"/>
<dbReference type="eggNOG" id="COG0057">
    <property type="taxonomic scope" value="Bacteria"/>
</dbReference>
<dbReference type="HOGENOM" id="CLU_030140_0_2_6"/>
<dbReference type="OrthoDB" id="9803304at2"/>
<dbReference type="UniPathway" id="UPA00244">
    <property type="reaction ID" value="UER00309"/>
</dbReference>
<dbReference type="Proteomes" id="UP000009175">
    <property type="component" value="Chromosome"/>
</dbReference>
<dbReference type="GO" id="GO:0005737">
    <property type="term" value="C:cytoplasm"/>
    <property type="evidence" value="ECO:0007669"/>
    <property type="project" value="UniProtKB-SubCell"/>
</dbReference>
<dbReference type="GO" id="GO:0048001">
    <property type="term" value="F:erythrose-4-phosphate dehydrogenase activity"/>
    <property type="evidence" value="ECO:0007669"/>
    <property type="project" value="UniProtKB-UniRule"/>
</dbReference>
<dbReference type="GO" id="GO:0051287">
    <property type="term" value="F:NAD binding"/>
    <property type="evidence" value="ECO:0007669"/>
    <property type="project" value="InterPro"/>
</dbReference>
<dbReference type="GO" id="GO:0042823">
    <property type="term" value="P:pyridoxal phosphate biosynthetic process"/>
    <property type="evidence" value="ECO:0007669"/>
    <property type="project" value="UniProtKB-UniRule"/>
</dbReference>
<dbReference type="GO" id="GO:0008615">
    <property type="term" value="P:pyridoxine biosynthetic process"/>
    <property type="evidence" value="ECO:0007669"/>
    <property type="project" value="UniProtKB-UniRule"/>
</dbReference>
<dbReference type="CDD" id="cd23937">
    <property type="entry name" value="GAPDH_C_E4PDH"/>
    <property type="match status" value="1"/>
</dbReference>
<dbReference type="CDD" id="cd17892">
    <property type="entry name" value="GAPDH_N_E4PDH"/>
    <property type="match status" value="1"/>
</dbReference>
<dbReference type="FunFam" id="3.30.360.10:FF:000007">
    <property type="entry name" value="D-erythrose-4-phosphate dehydrogenase"/>
    <property type="match status" value="1"/>
</dbReference>
<dbReference type="FunFam" id="3.40.50.720:FF:000001">
    <property type="entry name" value="Glyceraldehyde-3-phosphate dehydrogenase"/>
    <property type="match status" value="1"/>
</dbReference>
<dbReference type="Gene3D" id="3.30.360.10">
    <property type="entry name" value="Dihydrodipicolinate Reductase, domain 2"/>
    <property type="match status" value="1"/>
</dbReference>
<dbReference type="Gene3D" id="3.40.50.720">
    <property type="entry name" value="NAD(P)-binding Rossmann-like Domain"/>
    <property type="match status" value="1"/>
</dbReference>
<dbReference type="HAMAP" id="MF_01640">
    <property type="entry name" value="E4P_dehydrog"/>
    <property type="match status" value="1"/>
</dbReference>
<dbReference type="InterPro" id="IPR006422">
    <property type="entry name" value="E4P_DH_bac"/>
</dbReference>
<dbReference type="InterPro" id="IPR020831">
    <property type="entry name" value="GlycerAld/Erythrose_P_DH"/>
</dbReference>
<dbReference type="InterPro" id="IPR020830">
    <property type="entry name" value="GlycerAld_3-P_DH_AS"/>
</dbReference>
<dbReference type="InterPro" id="IPR020829">
    <property type="entry name" value="GlycerAld_3-P_DH_cat"/>
</dbReference>
<dbReference type="InterPro" id="IPR020828">
    <property type="entry name" value="GlycerAld_3-P_DH_NAD(P)-bd"/>
</dbReference>
<dbReference type="InterPro" id="IPR036291">
    <property type="entry name" value="NAD(P)-bd_dom_sf"/>
</dbReference>
<dbReference type="NCBIfam" id="TIGR01532">
    <property type="entry name" value="E4PD_g-proteo"/>
    <property type="match status" value="1"/>
</dbReference>
<dbReference type="NCBIfam" id="NF010058">
    <property type="entry name" value="PRK13535.1"/>
    <property type="match status" value="1"/>
</dbReference>
<dbReference type="PANTHER" id="PTHR43148">
    <property type="entry name" value="GLYCERALDEHYDE-3-PHOSPHATE DEHYDROGENASE 2"/>
    <property type="match status" value="1"/>
</dbReference>
<dbReference type="Pfam" id="PF02800">
    <property type="entry name" value="Gp_dh_C"/>
    <property type="match status" value="1"/>
</dbReference>
<dbReference type="Pfam" id="PF00044">
    <property type="entry name" value="Gp_dh_N"/>
    <property type="match status" value="1"/>
</dbReference>
<dbReference type="PIRSF" id="PIRSF000149">
    <property type="entry name" value="GAP_DH"/>
    <property type="match status" value="1"/>
</dbReference>
<dbReference type="PRINTS" id="PR00078">
    <property type="entry name" value="G3PDHDRGNASE"/>
</dbReference>
<dbReference type="SMART" id="SM00846">
    <property type="entry name" value="Gp_dh_N"/>
    <property type="match status" value="1"/>
</dbReference>
<dbReference type="SUPFAM" id="SSF55347">
    <property type="entry name" value="Glyceraldehyde-3-phosphate dehydrogenase-like, C-terminal domain"/>
    <property type="match status" value="1"/>
</dbReference>
<dbReference type="SUPFAM" id="SSF51735">
    <property type="entry name" value="NAD(P)-binding Rossmann-fold domains"/>
    <property type="match status" value="1"/>
</dbReference>
<dbReference type="PROSITE" id="PS00071">
    <property type="entry name" value="GAPDH"/>
    <property type="match status" value="1"/>
</dbReference>
<protein>
    <recommendedName>
        <fullName evidence="1">D-erythrose-4-phosphate dehydrogenase</fullName>
        <shortName evidence="1">E4PDH</shortName>
        <ecNumber evidence="1">1.2.1.72</ecNumber>
    </recommendedName>
</protein>
<sequence length="338" mass="36429">MIRVAINGYGRIGRSVLRALYESGKRGQMQLVAINELAKPEAIVHLTNYDTTHGRFHTRASLDEGMMHLGNDAIRLLAIEDAAALPWQALDVDLVFECTGALNDRQSAEAHITAGARKVLISHPSSADVDATIVYGVNDASLKATDTVVSNASCTTNCLVPVIDVLDRHFGVKSGAITTIHSAMNDQQVIDAYHDDLRRTRAASQSIIPVDTKLARGIERILPQMKDKFEAISVRVPTINVTAIDLSVTLDTRVDIATVNAALKAAADGSASGILGYTDEPLVSCDFNHDPRSSVVDGTQTRVSAGHLVKMLLWCDNEWGFANRMLDTALAMAATQAE</sequence>
<organism>
    <name type="scientific">Shewanella amazonensis (strain ATCC BAA-1098 / SB2B)</name>
    <dbReference type="NCBI Taxonomy" id="326297"/>
    <lineage>
        <taxon>Bacteria</taxon>
        <taxon>Pseudomonadati</taxon>
        <taxon>Pseudomonadota</taxon>
        <taxon>Gammaproteobacteria</taxon>
        <taxon>Alteromonadales</taxon>
        <taxon>Shewanellaceae</taxon>
        <taxon>Shewanella</taxon>
    </lineage>
</organism>